<name>CNNM1_MOUSE</name>
<reference key="1">
    <citation type="journal article" date="2009" name="PLoS Biol.">
        <title>Lineage-specific biology revealed by a finished genome assembly of the mouse.</title>
        <authorList>
            <person name="Church D.M."/>
            <person name="Goodstadt L."/>
            <person name="Hillier L.W."/>
            <person name="Zody M.C."/>
            <person name="Goldstein S."/>
            <person name="She X."/>
            <person name="Bult C.J."/>
            <person name="Agarwala R."/>
            <person name="Cherry J.L."/>
            <person name="DiCuccio M."/>
            <person name="Hlavina W."/>
            <person name="Kapustin Y."/>
            <person name="Meric P."/>
            <person name="Maglott D."/>
            <person name="Birtle Z."/>
            <person name="Marques A.C."/>
            <person name="Graves T."/>
            <person name="Zhou S."/>
            <person name="Teague B."/>
            <person name="Potamousis K."/>
            <person name="Churas C."/>
            <person name="Place M."/>
            <person name="Herschleb J."/>
            <person name="Runnheim R."/>
            <person name="Forrest D."/>
            <person name="Amos-Landgraf J."/>
            <person name="Schwartz D.C."/>
            <person name="Cheng Z."/>
            <person name="Lindblad-Toh K."/>
            <person name="Eichler E.E."/>
            <person name="Ponting C.P."/>
        </authorList>
    </citation>
    <scope>NUCLEOTIDE SEQUENCE [LARGE SCALE GENOMIC DNA]</scope>
    <source>
        <strain>C57BL/6J</strain>
    </source>
</reference>
<reference key="2">
    <citation type="journal article" date="2005" name="Science">
        <title>The transcriptional landscape of the mammalian genome.</title>
        <authorList>
            <person name="Carninci P."/>
            <person name="Kasukawa T."/>
            <person name="Katayama S."/>
            <person name="Gough J."/>
            <person name="Frith M.C."/>
            <person name="Maeda N."/>
            <person name="Oyama R."/>
            <person name="Ravasi T."/>
            <person name="Lenhard B."/>
            <person name="Wells C."/>
            <person name="Kodzius R."/>
            <person name="Shimokawa K."/>
            <person name="Bajic V.B."/>
            <person name="Brenner S.E."/>
            <person name="Batalov S."/>
            <person name="Forrest A.R."/>
            <person name="Zavolan M."/>
            <person name="Davis M.J."/>
            <person name="Wilming L.G."/>
            <person name="Aidinis V."/>
            <person name="Allen J.E."/>
            <person name="Ambesi-Impiombato A."/>
            <person name="Apweiler R."/>
            <person name="Aturaliya R.N."/>
            <person name="Bailey T.L."/>
            <person name="Bansal M."/>
            <person name="Baxter L."/>
            <person name="Beisel K.W."/>
            <person name="Bersano T."/>
            <person name="Bono H."/>
            <person name="Chalk A.M."/>
            <person name="Chiu K.P."/>
            <person name="Choudhary V."/>
            <person name="Christoffels A."/>
            <person name="Clutterbuck D.R."/>
            <person name="Crowe M.L."/>
            <person name="Dalla E."/>
            <person name="Dalrymple B.P."/>
            <person name="de Bono B."/>
            <person name="Della Gatta G."/>
            <person name="di Bernardo D."/>
            <person name="Down T."/>
            <person name="Engstrom P."/>
            <person name="Fagiolini M."/>
            <person name="Faulkner G."/>
            <person name="Fletcher C.F."/>
            <person name="Fukushima T."/>
            <person name="Furuno M."/>
            <person name="Futaki S."/>
            <person name="Gariboldi M."/>
            <person name="Georgii-Hemming P."/>
            <person name="Gingeras T.R."/>
            <person name="Gojobori T."/>
            <person name="Green R.E."/>
            <person name="Gustincich S."/>
            <person name="Harbers M."/>
            <person name="Hayashi Y."/>
            <person name="Hensch T.K."/>
            <person name="Hirokawa N."/>
            <person name="Hill D."/>
            <person name="Huminiecki L."/>
            <person name="Iacono M."/>
            <person name="Ikeo K."/>
            <person name="Iwama A."/>
            <person name="Ishikawa T."/>
            <person name="Jakt M."/>
            <person name="Kanapin A."/>
            <person name="Katoh M."/>
            <person name="Kawasawa Y."/>
            <person name="Kelso J."/>
            <person name="Kitamura H."/>
            <person name="Kitano H."/>
            <person name="Kollias G."/>
            <person name="Krishnan S.P."/>
            <person name="Kruger A."/>
            <person name="Kummerfeld S.K."/>
            <person name="Kurochkin I.V."/>
            <person name="Lareau L.F."/>
            <person name="Lazarevic D."/>
            <person name="Lipovich L."/>
            <person name="Liu J."/>
            <person name="Liuni S."/>
            <person name="McWilliam S."/>
            <person name="Madan Babu M."/>
            <person name="Madera M."/>
            <person name="Marchionni L."/>
            <person name="Matsuda H."/>
            <person name="Matsuzawa S."/>
            <person name="Miki H."/>
            <person name="Mignone F."/>
            <person name="Miyake S."/>
            <person name="Morris K."/>
            <person name="Mottagui-Tabar S."/>
            <person name="Mulder N."/>
            <person name="Nakano N."/>
            <person name="Nakauchi H."/>
            <person name="Ng P."/>
            <person name="Nilsson R."/>
            <person name="Nishiguchi S."/>
            <person name="Nishikawa S."/>
            <person name="Nori F."/>
            <person name="Ohara O."/>
            <person name="Okazaki Y."/>
            <person name="Orlando V."/>
            <person name="Pang K.C."/>
            <person name="Pavan W.J."/>
            <person name="Pavesi G."/>
            <person name="Pesole G."/>
            <person name="Petrovsky N."/>
            <person name="Piazza S."/>
            <person name="Reed J."/>
            <person name="Reid J.F."/>
            <person name="Ring B.Z."/>
            <person name="Ringwald M."/>
            <person name="Rost B."/>
            <person name="Ruan Y."/>
            <person name="Salzberg S.L."/>
            <person name="Sandelin A."/>
            <person name="Schneider C."/>
            <person name="Schoenbach C."/>
            <person name="Sekiguchi K."/>
            <person name="Semple C.A."/>
            <person name="Seno S."/>
            <person name="Sessa L."/>
            <person name="Sheng Y."/>
            <person name="Shibata Y."/>
            <person name="Shimada H."/>
            <person name="Shimada K."/>
            <person name="Silva D."/>
            <person name="Sinclair B."/>
            <person name="Sperling S."/>
            <person name="Stupka E."/>
            <person name="Sugiura K."/>
            <person name="Sultana R."/>
            <person name="Takenaka Y."/>
            <person name="Taki K."/>
            <person name="Tammoja K."/>
            <person name="Tan S.L."/>
            <person name="Tang S."/>
            <person name="Taylor M.S."/>
            <person name="Tegner J."/>
            <person name="Teichmann S.A."/>
            <person name="Ueda H.R."/>
            <person name="van Nimwegen E."/>
            <person name="Verardo R."/>
            <person name="Wei C.L."/>
            <person name="Yagi K."/>
            <person name="Yamanishi H."/>
            <person name="Zabarovsky E."/>
            <person name="Zhu S."/>
            <person name="Zimmer A."/>
            <person name="Hide W."/>
            <person name="Bult C."/>
            <person name="Grimmond S.M."/>
            <person name="Teasdale R.D."/>
            <person name="Liu E.T."/>
            <person name="Brusic V."/>
            <person name="Quackenbush J."/>
            <person name="Wahlestedt C."/>
            <person name="Mattick J.S."/>
            <person name="Hume D.A."/>
            <person name="Kai C."/>
            <person name="Sasaki D."/>
            <person name="Tomaru Y."/>
            <person name="Fukuda S."/>
            <person name="Kanamori-Katayama M."/>
            <person name="Suzuki M."/>
            <person name="Aoki J."/>
            <person name="Arakawa T."/>
            <person name="Iida J."/>
            <person name="Imamura K."/>
            <person name="Itoh M."/>
            <person name="Kato T."/>
            <person name="Kawaji H."/>
            <person name="Kawagashira N."/>
            <person name="Kawashima T."/>
            <person name="Kojima M."/>
            <person name="Kondo S."/>
            <person name="Konno H."/>
            <person name="Nakano K."/>
            <person name="Ninomiya N."/>
            <person name="Nishio T."/>
            <person name="Okada M."/>
            <person name="Plessy C."/>
            <person name="Shibata K."/>
            <person name="Shiraki T."/>
            <person name="Suzuki S."/>
            <person name="Tagami M."/>
            <person name="Waki K."/>
            <person name="Watahiki A."/>
            <person name="Okamura-Oho Y."/>
            <person name="Suzuki H."/>
            <person name="Kawai J."/>
            <person name="Hayashizaki Y."/>
        </authorList>
    </citation>
    <scope>NUCLEOTIDE SEQUENCE [LARGE SCALE MRNA] OF 1-176</scope>
</reference>
<reference key="3">
    <citation type="journal article" date="2004" name="BMC Genomics">
        <title>Molecular cloning and characterization of the mouse Acdp gene family.</title>
        <authorList>
            <person name="Wang C.-Y."/>
            <person name="Yang P."/>
            <person name="Shi J.-D."/>
            <person name="Purohit S."/>
            <person name="Guo D."/>
            <person name="An H."/>
            <person name="Gu J.-G."/>
            <person name="Ling J."/>
            <person name="Dong Z."/>
            <person name="She J.-X."/>
        </authorList>
    </citation>
    <scope>NUCLEOTIDE SEQUENCE [MRNA] OF 257-951</scope>
    <scope>SUBCELLULAR LOCATION</scope>
    <scope>TISSUE SPECIFICITY</scope>
    <source>
        <strain>C57BL/6J</strain>
        <tissue>Brain</tissue>
    </source>
</reference>
<reference key="4">
    <citation type="submission" date="2011-02" db="EMBL/GenBank/DDBJ databases">
        <title>Cyclin-like protein 1 (CLP-1) in mouse testis.</title>
        <authorList>
            <person name="Chandran U."/>
            <person name="Laloraya M."/>
            <person name="Kumar P.G."/>
        </authorList>
    </citation>
    <scope>NUCLEOTIDE SEQUENCE [MRNA] OF 366-951</scope>
    <source>
        <strain>SWR/J</strain>
        <tissue>Testis</tissue>
    </source>
</reference>
<reference key="5">
    <citation type="journal article" date="2010" name="Cell">
        <title>A tissue-specific atlas of mouse protein phosphorylation and expression.</title>
        <authorList>
            <person name="Huttlin E.L."/>
            <person name="Jedrychowski M.P."/>
            <person name="Elias J.E."/>
            <person name="Goswami T."/>
            <person name="Rad R."/>
            <person name="Beausoleil S.A."/>
            <person name="Villen J."/>
            <person name="Haas W."/>
            <person name="Sowa M.E."/>
            <person name="Gygi S.P."/>
        </authorList>
    </citation>
    <scope>PHOSPHORYLATION [LARGE SCALE ANALYSIS] AT THR-821; THR-824 AND SER-850</scope>
    <scope>IDENTIFICATION BY MASS SPECTROMETRY [LARGE SCALE ANALYSIS]</scope>
    <source>
        <tissue>Brain</tissue>
    </source>
</reference>
<reference key="6">
    <citation type="journal article" date="2012" name="J. Biol. Chem.">
        <title>Membrane topology and intracellular processing of Cyclin M2 (CNNM2).</title>
        <authorList>
            <person name="de Baaij J.H."/>
            <person name="Stuiver M."/>
            <person name="Meij I.C."/>
            <person name="Lainez S."/>
            <person name="Kopplin K."/>
            <person name="Venselaar H."/>
            <person name="Mueller D."/>
            <person name="Bindels R.J."/>
            <person name="Hoenderop J.G."/>
        </authorList>
    </citation>
    <scope>TISSUE SPECIFICITY</scope>
</reference>
<dbReference type="EMBL" id="AC140375">
    <property type="status" value="NOT_ANNOTATED_CDS"/>
    <property type="molecule type" value="Genomic_DNA"/>
</dbReference>
<dbReference type="EMBL" id="BB645731">
    <property type="status" value="NOT_ANNOTATED_CDS"/>
    <property type="molecule type" value="mRNA"/>
</dbReference>
<dbReference type="EMBL" id="AF202994">
    <property type="protein sequence ID" value="AAF86371.1"/>
    <property type="status" value="ALT_SEQ"/>
    <property type="molecule type" value="mRNA"/>
</dbReference>
<dbReference type="EMBL" id="DQ885890">
    <property type="protein sequence ID" value="ABI34706.5"/>
    <property type="molecule type" value="mRNA"/>
</dbReference>
<dbReference type="CCDS" id="CCDS50442.1"/>
<dbReference type="RefSeq" id="NP_113573.2">
    <property type="nucleotide sequence ID" value="NM_031396.3"/>
</dbReference>
<dbReference type="SMR" id="Q0GA42"/>
<dbReference type="BioGRID" id="219958">
    <property type="interactions" value="1"/>
</dbReference>
<dbReference type="FunCoup" id="Q0GA42">
    <property type="interactions" value="109"/>
</dbReference>
<dbReference type="STRING" id="10090.ENSMUSP00000131830"/>
<dbReference type="GlyGen" id="Q0GA42">
    <property type="glycosylation" value="6 sites, 3 N-linked glycans (2 sites), 1 O-linked glycan (4 sites)"/>
</dbReference>
<dbReference type="iPTMnet" id="Q0GA42"/>
<dbReference type="PhosphoSitePlus" id="Q0GA42"/>
<dbReference type="SwissPalm" id="Q0GA42"/>
<dbReference type="PaxDb" id="10090-ENSMUSP00000131830"/>
<dbReference type="ProteomicsDB" id="283404"/>
<dbReference type="Antibodypedia" id="52446">
    <property type="antibodies" value="52 antibodies from 17 providers"/>
</dbReference>
<dbReference type="DNASU" id="83674"/>
<dbReference type="Ensembl" id="ENSMUST00000165311.3">
    <property type="protein sequence ID" value="ENSMUSP00000131830.2"/>
    <property type="gene ID" value="ENSMUSG00000025189.10"/>
</dbReference>
<dbReference type="GeneID" id="83674"/>
<dbReference type="KEGG" id="mmu:83674"/>
<dbReference type="UCSC" id="uc008hoh.2">
    <property type="organism name" value="mouse"/>
</dbReference>
<dbReference type="AGR" id="MGI:1891366"/>
<dbReference type="CTD" id="26507"/>
<dbReference type="MGI" id="MGI:1891366">
    <property type="gene designation" value="Cnnm1"/>
</dbReference>
<dbReference type="VEuPathDB" id="HostDB:ENSMUSG00000025189"/>
<dbReference type="eggNOG" id="KOG2118">
    <property type="taxonomic scope" value="Eukaryota"/>
</dbReference>
<dbReference type="GeneTree" id="ENSGT00940000157525"/>
<dbReference type="HOGENOM" id="CLU_011310_1_1_1"/>
<dbReference type="InParanoid" id="Q0GA42"/>
<dbReference type="PhylomeDB" id="Q0GA42"/>
<dbReference type="TreeFam" id="TF101012"/>
<dbReference type="BioGRID-ORCS" id="83674">
    <property type="hits" value="1 hit in 78 CRISPR screens"/>
</dbReference>
<dbReference type="PRO" id="PR:Q0GA42"/>
<dbReference type="Proteomes" id="UP000000589">
    <property type="component" value="Chromosome 19"/>
</dbReference>
<dbReference type="RNAct" id="Q0GA42">
    <property type="molecule type" value="protein"/>
</dbReference>
<dbReference type="Bgee" id="ENSMUSG00000025189">
    <property type="expression patterns" value="Expressed in visual cortex and 118 other cell types or tissues"/>
</dbReference>
<dbReference type="ExpressionAtlas" id="Q0GA42">
    <property type="expression patterns" value="baseline and differential"/>
</dbReference>
<dbReference type="GO" id="GO:0030425">
    <property type="term" value="C:dendrite"/>
    <property type="evidence" value="ECO:0000314"/>
    <property type="project" value="UniProtKB"/>
</dbReference>
<dbReference type="GO" id="GO:0043025">
    <property type="term" value="C:neuronal cell body"/>
    <property type="evidence" value="ECO:0000314"/>
    <property type="project" value="UniProtKB"/>
</dbReference>
<dbReference type="GO" id="GO:0005886">
    <property type="term" value="C:plasma membrane"/>
    <property type="evidence" value="ECO:0000314"/>
    <property type="project" value="MGI"/>
</dbReference>
<dbReference type="GO" id="GO:0010960">
    <property type="term" value="P:magnesium ion homeostasis"/>
    <property type="evidence" value="ECO:0007669"/>
    <property type="project" value="InterPro"/>
</dbReference>
<dbReference type="GO" id="GO:0006811">
    <property type="term" value="P:monoatomic ion transport"/>
    <property type="evidence" value="ECO:0007669"/>
    <property type="project" value="UniProtKB-KW"/>
</dbReference>
<dbReference type="CDD" id="cd04590">
    <property type="entry name" value="CBS_pair_CorC_HlyC_assoc"/>
    <property type="match status" value="1"/>
</dbReference>
<dbReference type="FunFam" id="3.10.580.10:FF:000001">
    <property type="entry name" value="Putative metal transporter CNNM3 isoform 2"/>
    <property type="match status" value="1"/>
</dbReference>
<dbReference type="Gene3D" id="3.10.580.10">
    <property type="entry name" value="CBS-domain"/>
    <property type="match status" value="1"/>
</dbReference>
<dbReference type="InterPro" id="IPR045095">
    <property type="entry name" value="ACDP"/>
</dbReference>
<dbReference type="InterPro" id="IPR000644">
    <property type="entry name" value="CBS_dom"/>
</dbReference>
<dbReference type="InterPro" id="IPR046342">
    <property type="entry name" value="CBS_dom_sf"/>
</dbReference>
<dbReference type="InterPro" id="IPR002550">
    <property type="entry name" value="CNNM"/>
</dbReference>
<dbReference type="InterPro" id="IPR044751">
    <property type="entry name" value="Ion_transp-like_CBS"/>
</dbReference>
<dbReference type="PANTHER" id="PTHR12064">
    <property type="entry name" value="METAL TRANSPORTER CNNM"/>
    <property type="match status" value="1"/>
</dbReference>
<dbReference type="PANTHER" id="PTHR12064:SF28">
    <property type="entry name" value="METAL TRANSPORTER CNNM1"/>
    <property type="match status" value="1"/>
</dbReference>
<dbReference type="Pfam" id="PF00571">
    <property type="entry name" value="CBS"/>
    <property type="match status" value="1"/>
</dbReference>
<dbReference type="Pfam" id="PF01595">
    <property type="entry name" value="CNNM"/>
    <property type="match status" value="1"/>
</dbReference>
<dbReference type="Pfam" id="PF25511">
    <property type="entry name" value="Ig_CNNM4_N"/>
    <property type="match status" value="1"/>
</dbReference>
<dbReference type="SUPFAM" id="SSF54631">
    <property type="entry name" value="CBS-domain pair"/>
    <property type="match status" value="1"/>
</dbReference>
<dbReference type="PROSITE" id="PS51371">
    <property type="entry name" value="CBS"/>
    <property type="match status" value="2"/>
</dbReference>
<dbReference type="PROSITE" id="PS51846">
    <property type="entry name" value="CNNM"/>
    <property type="match status" value="1"/>
</dbReference>
<protein>
    <recommendedName>
        <fullName>Metal transporter CNNM1</fullName>
    </recommendedName>
    <alternativeName>
        <fullName>Ancient conserved domain-containing protein 1</fullName>
        <shortName>mACDP1</shortName>
    </alternativeName>
    <alternativeName>
        <fullName>Cyclin-M1</fullName>
    </alternativeName>
    <alternativeName>
        <fullName>Cyclin-like protein 1</fullName>
        <shortName>CLP-1</shortName>
    </alternativeName>
</protein>
<feature type="chain" id="PRO_0000295759" description="Metal transporter CNNM1">
    <location>
        <begin position="1"/>
        <end position="951"/>
    </location>
</feature>
<feature type="transmembrane region" description="Helical" evidence="2">
    <location>
        <begin position="23"/>
        <end position="43"/>
    </location>
</feature>
<feature type="transmembrane region" description="Helical" evidence="2">
    <location>
        <begin position="222"/>
        <end position="242"/>
    </location>
</feature>
<feature type="transmembrane region" description="Helical" evidence="2">
    <location>
        <begin position="282"/>
        <end position="302"/>
    </location>
</feature>
<feature type="transmembrane region" description="Helical" evidence="2">
    <location>
        <begin position="319"/>
        <end position="339"/>
    </location>
</feature>
<feature type="domain" description="CNNM transmembrane" evidence="4">
    <location>
        <begin position="218"/>
        <end position="414"/>
    </location>
</feature>
<feature type="domain" description="CBS 1" evidence="3">
    <location>
        <begin position="433"/>
        <end position="495"/>
    </location>
</feature>
<feature type="domain" description="CBS 2" evidence="3">
    <location>
        <begin position="502"/>
        <end position="568"/>
    </location>
</feature>
<feature type="region of interest" description="Disordered" evidence="5">
    <location>
        <begin position="114"/>
        <end position="138"/>
    </location>
</feature>
<feature type="region of interest" description="Disordered" evidence="5">
    <location>
        <begin position="731"/>
        <end position="754"/>
    </location>
</feature>
<feature type="region of interest" description="Disordered" evidence="5">
    <location>
        <begin position="795"/>
        <end position="830"/>
    </location>
</feature>
<feature type="region of interest" description="Disordered" evidence="5">
    <location>
        <begin position="903"/>
        <end position="951"/>
    </location>
</feature>
<feature type="compositionally biased region" description="Polar residues" evidence="5">
    <location>
        <begin position="731"/>
        <end position="740"/>
    </location>
</feature>
<feature type="compositionally biased region" description="Polar residues" evidence="5">
    <location>
        <begin position="814"/>
        <end position="824"/>
    </location>
</feature>
<feature type="compositionally biased region" description="Basic residues" evidence="5">
    <location>
        <begin position="920"/>
        <end position="932"/>
    </location>
</feature>
<feature type="compositionally biased region" description="Polar residues" evidence="5">
    <location>
        <begin position="942"/>
        <end position="951"/>
    </location>
</feature>
<feature type="modified residue" description="Phosphothreonine" evidence="9">
    <location>
        <position position="821"/>
    </location>
</feature>
<feature type="modified residue" description="Phosphothreonine" evidence="9">
    <location>
        <position position="824"/>
    </location>
</feature>
<feature type="modified residue" description="Phosphoserine" evidence="9">
    <location>
        <position position="850"/>
    </location>
</feature>
<feature type="sequence conflict" description="In Ref. 3; AAF86371." evidence="8" ref="3">
    <original>C</original>
    <variation>F</variation>
    <location>
        <position position="708"/>
    </location>
</feature>
<feature type="sequence conflict" description="In Ref. 4; ABI34706." evidence="8" ref="4">
    <original>L</original>
    <variation>I</variation>
    <location>
        <position position="726"/>
    </location>
</feature>
<feature type="sequence conflict" description="In Ref. 4; ABI34706." evidence="8" ref="4">
    <original>P</original>
    <variation>L</variation>
    <location>
        <position position="730"/>
    </location>
</feature>
<proteinExistence type="evidence at protein level"/>
<comment type="function">
    <text evidence="1">Probable metal transporter.</text>
</comment>
<comment type="subcellular location">
    <subcellularLocation>
        <location evidence="6">Cell membrane</location>
        <topology evidence="6">Multi-pass membrane protein</topology>
    </subcellularLocation>
</comment>
<comment type="tissue specificity">
    <text evidence="6 7">Predominantly expressed in brain and testis, and, at lower levels, in kidney. In the brain, expressed in hippocampal neurons (at protein level).</text>
</comment>
<comment type="miscellaneous">
    <text>Shares weak sequence similarity with the cyclin family, explaining its name. However, it has no cyclin-like function in vivo.</text>
</comment>
<comment type="similarity">
    <text evidence="8">Belongs to the ACDP family.</text>
</comment>
<comment type="sequence caution" evidence="8">
    <conflict type="erroneous initiation">
        <sequence resource="EMBL-CDS" id="AAF86371"/>
    </conflict>
    <text>Truncated N-terminus.</text>
</comment>
<comment type="sequence caution" evidence="8">
    <conflict type="frameshift">
        <sequence resource="EMBL-CDS" id="AAF86371"/>
    </conflict>
</comment>
<evidence type="ECO:0000250" key="1"/>
<evidence type="ECO:0000255" key="2"/>
<evidence type="ECO:0000255" key="3">
    <source>
        <dbReference type="PROSITE-ProRule" id="PRU00703"/>
    </source>
</evidence>
<evidence type="ECO:0000255" key="4">
    <source>
        <dbReference type="PROSITE-ProRule" id="PRU01193"/>
    </source>
</evidence>
<evidence type="ECO:0000256" key="5">
    <source>
        <dbReference type="SAM" id="MobiDB-lite"/>
    </source>
</evidence>
<evidence type="ECO:0000269" key="6">
    <source>
    </source>
</evidence>
<evidence type="ECO:0000269" key="7">
    <source>
    </source>
</evidence>
<evidence type="ECO:0000305" key="8"/>
<evidence type="ECO:0007744" key="9">
    <source>
    </source>
</evidence>
<accession>Q0GA42</accession>
<accession>Q9JIQ6</accession>
<gene>
    <name type="primary">Cnnm1</name>
    <name type="synonym">Acdp1</name>
</gene>
<organism>
    <name type="scientific">Mus musculus</name>
    <name type="common">Mouse</name>
    <dbReference type="NCBI Taxonomy" id="10090"/>
    <lineage>
        <taxon>Eukaryota</taxon>
        <taxon>Metazoa</taxon>
        <taxon>Chordata</taxon>
        <taxon>Craniata</taxon>
        <taxon>Vertebrata</taxon>
        <taxon>Euteleostomi</taxon>
        <taxon>Mammalia</taxon>
        <taxon>Eutheria</taxon>
        <taxon>Euarchontoglires</taxon>
        <taxon>Glires</taxon>
        <taxon>Rodentia</taxon>
        <taxon>Myomorpha</taxon>
        <taxon>Muroidea</taxon>
        <taxon>Muridae</taxon>
        <taxon>Murinae</taxon>
        <taxon>Mus</taxon>
        <taxon>Mus</taxon>
    </lineage>
</organism>
<keyword id="KW-0129">CBS domain</keyword>
<keyword id="KW-1003">Cell membrane</keyword>
<keyword id="KW-0406">Ion transport</keyword>
<keyword id="KW-0472">Membrane</keyword>
<keyword id="KW-0597">Phosphoprotein</keyword>
<keyword id="KW-1185">Reference proteome</keyword>
<keyword id="KW-0677">Repeat</keyword>
<keyword id="KW-0812">Transmembrane</keyword>
<keyword id="KW-1133">Transmembrane helix</keyword>
<keyword id="KW-0813">Transport</keyword>
<sequence>MAAAAAAAAALGVRLRDCCSRGAVLLLFFSLSPRPPAAAAWLLGLRPEDTAGGRVSLEGGTLRAAEGTSFLLRVYFQPGPPVPAAPVPAPSLAPGENGTGDWAPRLVFIEEPPGAGGAAPSAVPTRPPGPQRCREQSDWASDVEVLGPLRPGGVAGSALVQVRVRELRKGEAERGGAGGGGKLFSLCAWDGRAWHHHGAAGGFLLRVRPRLYGPGGDLLPPAWLRALGALLLLALSALFSGLRLSLLSLDPVELRVLRNSGSAAEQEQARRVQAVRGRGTHLLCTLLLGQAGANAALAGWLYASLPPGVGDPGEDSGEAGVHFPWLPALVCTGAVFLGAEICPYSVCSRHGLAIASHSVCLTRLLMAAAFPVCYPLGRLLDWALRQEISTFYTREKLLETLRAADPYSDLVKEELNIIQGALELRTKVVEEVLTPLGDCFMLRSDAVLDFATVSEILRSGYTRIPVYEGDQRHNIVDILFVKDLAFVDPDDCTPLLTVTRFYNRPLHCVFNDTRLDTVLEEFKKGKSHLAIVQRVNNEGEGDPFYEVMGIVTLEDIIEEIIKSEILDETDLYTDNRKKQRVPHRERRRHDFSLFKLSDSEIRVKISPQLLLATHRFMATEVEPFKSLYLSEKILLRLLKHPNVIQELKFDERNKKAPEHYLYQRNRPVDYFVLLLQGKVEVEVGKEGLRFENGAFTYYGVPAIMTSACSDNDVRKVGSLAGSSVFLNRSPSRCSGLNRSESPNRERSDFGGSNTQLYSSSNNLYTPDYSVHILSDVQFVKITRQQYQNALTACHMDSSPQSPDMEAFTDGDSTKAPTTRGTPQTPKDDPVLTLLSNRTSLPCSRSDGLRSPGEVVYLRMEEMAFPQEEMPNFEEHRSQQVSLSPVAVPTTAASDPECCNIHLDPEASPCSSDSEENMGKKLLRTLSGRKRKKSADGERASEENSNLTPLIT</sequence>